<dbReference type="EC" id="2.7.1.187" evidence="1"/>
<dbReference type="EMBL" id="Y18523">
    <property type="protein sequence ID" value="CAD29481.2"/>
    <property type="molecule type" value="Genomic_DNA"/>
</dbReference>
<dbReference type="EMBL" id="CP003170">
    <property type="protein sequence ID" value="AEV84570.1"/>
    <property type="molecule type" value="Genomic_DNA"/>
</dbReference>
<dbReference type="RefSeq" id="WP_014690642.1">
    <property type="nucleotide sequence ID" value="NC_017803.1"/>
</dbReference>
<dbReference type="PDB" id="6WB7">
    <property type="method" value="X-ray"/>
    <property type="resolution" value="2.44 A"/>
    <property type="chains" value="A/B/C/D=1-299"/>
</dbReference>
<dbReference type="PDBsum" id="6WB7"/>
<dbReference type="SMR" id="Q8RMD4"/>
<dbReference type="STRING" id="134676.ACPL_3675"/>
<dbReference type="KEGG" id="ase:ACPL_3675"/>
<dbReference type="PATRIC" id="fig|134676.3.peg.3591"/>
<dbReference type="eggNOG" id="COG0524">
    <property type="taxonomic scope" value="Bacteria"/>
</dbReference>
<dbReference type="HOGENOM" id="CLU_027634_12_0_11"/>
<dbReference type="OrthoDB" id="9808601at2"/>
<dbReference type="BRENDA" id="2.7.1.187">
    <property type="organism ID" value="144"/>
</dbReference>
<dbReference type="Proteomes" id="UP000005440">
    <property type="component" value="Chromosome"/>
</dbReference>
<dbReference type="GO" id="GO:0016301">
    <property type="term" value="F:kinase activity"/>
    <property type="evidence" value="ECO:0007669"/>
    <property type="project" value="UniProtKB-KW"/>
</dbReference>
<dbReference type="CDD" id="cd01168">
    <property type="entry name" value="adenosine_kinase"/>
    <property type="match status" value="1"/>
</dbReference>
<dbReference type="Gene3D" id="3.40.1190.20">
    <property type="match status" value="1"/>
</dbReference>
<dbReference type="InterPro" id="IPR002173">
    <property type="entry name" value="Carboh/pur_kinase_PfkB_CS"/>
</dbReference>
<dbReference type="InterPro" id="IPR011611">
    <property type="entry name" value="PfkB_dom"/>
</dbReference>
<dbReference type="InterPro" id="IPR029056">
    <property type="entry name" value="Ribokinase-like"/>
</dbReference>
<dbReference type="PANTHER" id="PTHR10584:SF166">
    <property type="entry name" value="RIBOKINASE"/>
    <property type="match status" value="1"/>
</dbReference>
<dbReference type="PANTHER" id="PTHR10584">
    <property type="entry name" value="SUGAR KINASE"/>
    <property type="match status" value="1"/>
</dbReference>
<dbReference type="Pfam" id="PF00294">
    <property type="entry name" value="PfkB"/>
    <property type="match status" value="1"/>
</dbReference>
<dbReference type="SUPFAM" id="SSF53613">
    <property type="entry name" value="Ribokinase-like"/>
    <property type="match status" value="1"/>
</dbReference>
<dbReference type="PROSITE" id="PS00584">
    <property type="entry name" value="PFKB_KINASES_2"/>
    <property type="match status" value="1"/>
</dbReference>
<accession>Q8RMD4</accession>
<keyword id="KW-0002">3D-structure</keyword>
<keyword id="KW-0418">Kinase</keyword>
<keyword id="KW-1185">Reference proteome</keyword>
<keyword id="KW-0808">Transferase</keyword>
<name>ACBK_ACTS5</name>
<sequence length="299" mass="31480">MSEHTDVLVLGGAGVDTIAYVPELPLPFQDSYVVAAIEPRAGQTGDNVALGLHTLGLRTMHVDVLGDDPEGDLVRAFHTRHGLPFAALPTAAGTKRAVNLVGPDGRRLSLWDGSREAEEDRYPAALIAAHTAHARHVHVCITPPGQHVFGQLNDLPVTVSTDLHNWDGAYEGFEVYAFNADLVFLSATALTDVAATMRRVIDRGRARLVVATDGAHGGSVLVRGETEVRRYAAVAPEAPVVDSNGAGDAFVSGFLFGHLAGEPLETCLRYGAIAGAYACTIPATRAGAIDRAALLRPAA</sequence>
<organism>
    <name type="scientific">Actinoplanes sp. (strain ATCC 31044 / CBS 674.73 / SE50/110)</name>
    <dbReference type="NCBI Taxonomy" id="134676"/>
    <lineage>
        <taxon>Bacteria</taxon>
        <taxon>Bacillati</taxon>
        <taxon>Actinomycetota</taxon>
        <taxon>Actinomycetes</taxon>
        <taxon>Micromonosporales</taxon>
        <taxon>Micromonosporaceae</taxon>
        <taxon>Actinoplanes</taxon>
    </lineage>
</organism>
<comment type="function">
    <text evidence="1">Catalyzes the phosphorylation of the alpha-glucosidase inhibitor acarbose. Phosphorylation of acarbose could be a resistance-like self-protection mechanism.</text>
</comment>
<comment type="catalytic activity">
    <reaction evidence="1">
        <text>acarbose + ATP = acarbose 7(IV)-phosphate + ADP + H(+)</text>
        <dbReference type="Rhea" id="RHEA:45124"/>
        <dbReference type="ChEBI" id="CHEBI:15378"/>
        <dbReference type="ChEBI" id="CHEBI:30616"/>
        <dbReference type="ChEBI" id="CHEBI:84363"/>
        <dbReference type="ChEBI" id="CHEBI:84975"/>
        <dbReference type="ChEBI" id="CHEBI:456216"/>
        <dbReference type="EC" id="2.7.1.187"/>
    </reaction>
</comment>
<comment type="similarity">
    <text evidence="3">Belongs to the carbohydrate kinase PfkB family.</text>
</comment>
<gene>
    <name evidence="2" type="primary">acbK</name>
    <name evidence="4" type="ordered locus">ACPL_3675</name>
</gene>
<reference key="1">
    <citation type="journal article" date="2002" name="J. Biol. Chem.">
        <title>Biosynthesis of the C(7)-cyclitol moiety of acarbose in Actinoplanes species SE50/110. 7-O-phosphorylation of the initial cyclitol precursor leads to proposal of a new biosynthetic pathway.</title>
        <authorList>
            <person name="Zhang C.S."/>
            <person name="Stratmann A."/>
            <person name="Block O."/>
            <person name="Bruckner R."/>
            <person name="Podeschwa M."/>
            <person name="Altenbach H.J."/>
            <person name="Wehmeier U.F."/>
            <person name="Piepersberg W."/>
        </authorList>
    </citation>
    <scope>NUCLEOTIDE SEQUENCE [GENOMIC DNA]</scope>
    <scope>FUNCTION</scope>
    <scope>CATALYTIC ACTIVITY</scope>
    <source>
        <strain>ATCC 31044 / CBS 674.73 / SE50/110</strain>
    </source>
</reference>
<reference key="2">
    <citation type="submission" date="2011-12" db="EMBL/GenBank/DDBJ databases">
        <title>The complete genome sequence of the acarbose producer Actinoplanes sp. SE50/110.</title>
        <authorList>
            <person name="Schwientek P."/>
            <person name="Szczepanowski R."/>
            <person name="Kalinowski J."/>
            <person name="Klein A."/>
            <person name="Selber K."/>
            <person name="Wehmeier U.F."/>
            <person name="Stoye J."/>
            <person name="Puehler A."/>
        </authorList>
    </citation>
    <scope>NUCLEOTIDE SEQUENCE [LARGE SCALE GENOMIC DNA]</scope>
    <source>
        <strain>ATCC 31044 / CBS 674.73 / SE50/110</strain>
    </source>
</reference>
<evidence type="ECO:0000269" key="1">
    <source>
    </source>
</evidence>
<evidence type="ECO:0000303" key="2">
    <source>
    </source>
</evidence>
<evidence type="ECO:0000305" key="3"/>
<evidence type="ECO:0000312" key="4">
    <source>
        <dbReference type="EMBL" id="AEV84570.1"/>
    </source>
</evidence>
<evidence type="ECO:0007829" key="5">
    <source>
        <dbReference type="PDB" id="6WB7"/>
    </source>
</evidence>
<proteinExistence type="evidence at protein level"/>
<feature type="chain" id="PRO_0000435390" description="Acarbose 7(IV)-phosphotransferase">
    <location>
        <begin position="1"/>
        <end position="299"/>
    </location>
</feature>
<feature type="strand" evidence="5">
    <location>
        <begin position="6"/>
        <end position="11"/>
    </location>
</feature>
<feature type="strand" evidence="5">
    <location>
        <begin position="14"/>
        <end position="20"/>
    </location>
</feature>
<feature type="strand" evidence="5">
    <location>
        <begin position="22"/>
        <end position="25"/>
    </location>
</feature>
<feature type="strand" evidence="5">
    <location>
        <begin position="30"/>
        <end position="35"/>
    </location>
</feature>
<feature type="helix" evidence="5">
    <location>
        <begin position="44"/>
        <end position="54"/>
    </location>
</feature>
<feature type="strand" evidence="5">
    <location>
        <begin position="59"/>
        <end position="65"/>
    </location>
</feature>
<feature type="helix" evidence="5">
    <location>
        <begin position="69"/>
        <end position="81"/>
    </location>
</feature>
<feature type="strand" evidence="5">
    <location>
        <begin position="85"/>
        <end position="89"/>
    </location>
</feature>
<feature type="strand" evidence="5">
    <location>
        <begin position="95"/>
        <end position="101"/>
    </location>
</feature>
<feature type="strand" evidence="5">
    <location>
        <begin position="107"/>
        <end position="112"/>
    </location>
</feature>
<feature type="helix" evidence="5">
    <location>
        <begin position="124"/>
        <end position="129"/>
    </location>
</feature>
<feature type="strand" evidence="5">
    <location>
        <begin position="135"/>
        <end position="142"/>
    </location>
</feature>
<feature type="helix" evidence="5">
    <location>
        <begin position="145"/>
        <end position="147"/>
    </location>
</feature>
<feature type="helix" evidence="5">
    <location>
        <begin position="149"/>
        <end position="152"/>
    </location>
</feature>
<feature type="strand" evidence="5">
    <location>
        <begin position="155"/>
        <end position="162"/>
    </location>
</feature>
<feature type="helix" evidence="5">
    <location>
        <begin position="171"/>
        <end position="173"/>
    </location>
</feature>
<feature type="helix" evidence="5">
    <location>
        <begin position="174"/>
        <end position="177"/>
    </location>
</feature>
<feature type="strand" evidence="5">
    <location>
        <begin position="181"/>
        <end position="187"/>
    </location>
</feature>
<feature type="helix" evidence="5">
    <location>
        <begin position="193"/>
        <end position="201"/>
    </location>
</feature>
<feature type="strand" evidence="5">
    <location>
        <begin position="207"/>
        <end position="212"/>
    </location>
</feature>
<feature type="helix" evidence="5">
    <location>
        <begin position="214"/>
        <end position="216"/>
    </location>
</feature>
<feature type="strand" evidence="5">
    <location>
        <begin position="218"/>
        <end position="222"/>
    </location>
</feature>
<feature type="strand" evidence="5">
    <location>
        <begin position="229"/>
        <end position="231"/>
    </location>
</feature>
<feature type="helix" evidence="5">
    <location>
        <begin position="246"/>
        <end position="258"/>
    </location>
</feature>
<feature type="turn" evidence="5">
    <location>
        <begin position="259"/>
        <end position="261"/>
    </location>
</feature>
<feature type="helix" evidence="5">
    <location>
        <begin position="264"/>
        <end position="278"/>
    </location>
</feature>
<feature type="helix" evidence="5">
    <location>
        <begin position="291"/>
        <end position="294"/>
    </location>
</feature>
<protein>
    <recommendedName>
        <fullName evidence="3">Acarbose 7(IV)-phosphotransferase</fullName>
        <ecNumber evidence="1">2.7.1.187</ecNumber>
    </recommendedName>
    <alternativeName>
        <fullName evidence="2">Acarbose 7-kinase</fullName>
    </alternativeName>
</protein>